<proteinExistence type="inferred from homology"/>
<comment type="function">
    <text evidence="1">Involved in the restart of stalled replication forks, which reloads the replicative helicase on sites other than the origin of replication; the PriA-PriB pathway is the major replication restart pathway. During primosome assembly it facilitates complex formation between PriA and DnaT on DNA; stabilizes PriA on DNA. Stimulates the DNA unwinding activity of PriA helicase.</text>
</comment>
<comment type="subunit">
    <text evidence="1">Homodimer. Interacts with PriA and DnaT. Component of the replication restart primosome. Primosome assembly occurs via a 'hand-off' mechanism. PriA binds to replication forks, subsequently PriB then DnaT bind; DnaT then displaces ssDNA to generate the helicase loading substrate.</text>
</comment>
<comment type="similarity">
    <text evidence="1">Belongs to the PriB family.</text>
</comment>
<reference key="1">
    <citation type="submission" date="2002-12" db="EMBL/GenBank/DDBJ databases">
        <title>Complete genome sequence of Vibrio vulnificus CMCP6.</title>
        <authorList>
            <person name="Rhee J.H."/>
            <person name="Kim S.Y."/>
            <person name="Chung S.S."/>
            <person name="Kim J.J."/>
            <person name="Moon Y.H."/>
            <person name="Jeong H."/>
            <person name="Choy H.E."/>
        </authorList>
    </citation>
    <scope>NUCLEOTIDE SEQUENCE [LARGE SCALE GENOMIC DNA]</scope>
    <source>
        <strain>CMCP6</strain>
    </source>
</reference>
<dbReference type="EMBL" id="AE016795">
    <property type="protein sequence ID" value="AAO09837.1"/>
    <property type="molecule type" value="Genomic_DNA"/>
</dbReference>
<dbReference type="RefSeq" id="WP_011079363.1">
    <property type="nucleotide sequence ID" value="NC_004459.3"/>
</dbReference>
<dbReference type="SMR" id="Q8DCL5"/>
<dbReference type="KEGG" id="vvu:VV1_1388"/>
<dbReference type="HOGENOM" id="CLU_166075_0_0_6"/>
<dbReference type="Proteomes" id="UP000002275">
    <property type="component" value="Chromosome 1"/>
</dbReference>
<dbReference type="GO" id="GO:1990077">
    <property type="term" value="C:primosome complex"/>
    <property type="evidence" value="ECO:0007669"/>
    <property type="project" value="UniProtKB-KW"/>
</dbReference>
<dbReference type="GO" id="GO:0003697">
    <property type="term" value="F:single-stranded DNA binding"/>
    <property type="evidence" value="ECO:0007669"/>
    <property type="project" value="UniProtKB-UniRule"/>
</dbReference>
<dbReference type="GO" id="GO:0006269">
    <property type="term" value="P:DNA replication, synthesis of primer"/>
    <property type="evidence" value="ECO:0007669"/>
    <property type="project" value="UniProtKB-KW"/>
</dbReference>
<dbReference type="Gene3D" id="2.40.50.140">
    <property type="entry name" value="Nucleic acid-binding proteins"/>
    <property type="match status" value="1"/>
</dbReference>
<dbReference type="HAMAP" id="MF_00720">
    <property type="entry name" value="PriB"/>
    <property type="match status" value="1"/>
</dbReference>
<dbReference type="InterPro" id="IPR012340">
    <property type="entry name" value="NA-bd_OB-fold"/>
</dbReference>
<dbReference type="InterPro" id="IPR000424">
    <property type="entry name" value="Primosome_PriB/ssb"/>
</dbReference>
<dbReference type="InterPro" id="IPR023646">
    <property type="entry name" value="Prisomal_replication_PriB"/>
</dbReference>
<dbReference type="NCBIfam" id="TIGR04418">
    <property type="entry name" value="PriB_gamma"/>
    <property type="match status" value="1"/>
</dbReference>
<dbReference type="Pfam" id="PF22657">
    <property type="entry name" value="SSB_1"/>
    <property type="match status" value="1"/>
</dbReference>
<dbReference type="PIRSF" id="PIRSF003135">
    <property type="entry name" value="Primosomal_n"/>
    <property type="match status" value="1"/>
</dbReference>
<dbReference type="SUPFAM" id="SSF50249">
    <property type="entry name" value="Nucleic acid-binding proteins"/>
    <property type="match status" value="1"/>
</dbReference>
<dbReference type="PROSITE" id="PS50935">
    <property type="entry name" value="SSB"/>
    <property type="match status" value="1"/>
</dbReference>
<gene>
    <name evidence="1" type="primary">priB</name>
    <name type="ordered locus">VV1_1388</name>
</gene>
<sequence length="100" mass="10984">MTNRMELSGTVVKDPIRSQSPAGISHCRFWLEHRSVVVEADLPRQVFCRMPVVVSGKGSQDITQQIVLGSNIKVSGFVAYQTGRNGVGKLVLHADDIIHI</sequence>
<accession>Q8DCL5</accession>
<name>PRIB_VIBVU</name>
<evidence type="ECO:0000255" key="1">
    <source>
        <dbReference type="HAMAP-Rule" id="MF_00720"/>
    </source>
</evidence>
<organism>
    <name type="scientific">Vibrio vulnificus (strain CMCP6)</name>
    <dbReference type="NCBI Taxonomy" id="216895"/>
    <lineage>
        <taxon>Bacteria</taxon>
        <taxon>Pseudomonadati</taxon>
        <taxon>Pseudomonadota</taxon>
        <taxon>Gammaproteobacteria</taxon>
        <taxon>Vibrionales</taxon>
        <taxon>Vibrionaceae</taxon>
        <taxon>Vibrio</taxon>
    </lineage>
</organism>
<protein>
    <recommendedName>
        <fullName evidence="1">Replication restart protein PriB</fullName>
    </recommendedName>
</protein>
<keyword id="KW-0235">DNA replication</keyword>
<keyword id="KW-0238">DNA-binding</keyword>
<keyword id="KW-0639">Primosome</keyword>
<feature type="chain" id="PRO_0000199066" description="Replication restart protein PriB">
    <location>
        <begin position="1"/>
        <end position="100"/>
    </location>
</feature>
<feature type="domain" description="SSB" evidence="1">
    <location>
        <begin position="1"/>
        <end position="100"/>
    </location>
</feature>